<keyword id="KW-0067">ATP-binding</keyword>
<keyword id="KW-0460">Magnesium</keyword>
<keyword id="KW-0464">Manganese</keyword>
<keyword id="KW-0479">Metal-binding</keyword>
<keyword id="KW-0547">Nucleotide-binding</keyword>
<keyword id="KW-0548">Nucleotidyltransferase</keyword>
<keyword id="KW-0808">Transferase</keyword>
<proteinExistence type="inferred from homology"/>
<comment type="function">
    <text evidence="1">Nucleotidyltransferase involved in the post-translational modification of proteins. It can catalyze the addition of adenosine monophosphate (AMP) or uridine monophosphate (UMP) to a protein, resulting in modifications known as AMPylation and UMPylation.</text>
</comment>
<comment type="catalytic activity">
    <reaction evidence="1">
        <text>L-seryl-[protein] + ATP = 3-O-(5'-adenylyl)-L-seryl-[protein] + diphosphate</text>
        <dbReference type="Rhea" id="RHEA:58120"/>
        <dbReference type="Rhea" id="RHEA-COMP:9863"/>
        <dbReference type="Rhea" id="RHEA-COMP:15073"/>
        <dbReference type="ChEBI" id="CHEBI:29999"/>
        <dbReference type="ChEBI" id="CHEBI:30616"/>
        <dbReference type="ChEBI" id="CHEBI:33019"/>
        <dbReference type="ChEBI" id="CHEBI:142516"/>
        <dbReference type="EC" id="2.7.7.108"/>
    </reaction>
</comment>
<comment type="catalytic activity">
    <reaction evidence="1">
        <text>L-threonyl-[protein] + ATP = 3-O-(5'-adenylyl)-L-threonyl-[protein] + diphosphate</text>
        <dbReference type="Rhea" id="RHEA:54292"/>
        <dbReference type="Rhea" id="RHEA-COMP:11060"/>
        <dbReference type="Rhea" id="RHEA-COMP:13847"/>
        <dbReference type="ChEBI" id="CHEBI:30013"/>
        <dbReference type="ChEBI" id="CHEBI:30616"/>
        <dbReference type="ChEBI" id="CHEBI:33019"/>
        <dbReference type="ChEBI" id="CHEBI:138113"/>
        <dbReference type="EC" id="2.7.7.108"/>
    </reaction>
</comment>
<comment type="catalytic activity">
    <reaction evidence="1">
        <text>L-tyrosyl-[protein] + ATP = O-(5'-adenylyl)-L-tyrosyl-[protein] + diphosphate</text>
        <dbReference type="Rhea" id="RHEA:54288"/>
        <dbReference type="Rhea" id="RHEA-COMP:10136"/>
        <dbReference type="Rhea" id="RHEA-COMP:13846"/>
        <dbReference type="ChEBI" id="CHEBI:30616"/>
        <dbReference type="ChEBI" id="CHEBI:33019"/>
        <dbReference type="ChEBI" id="CHEBI:46858"/>
        <dbReference type="ChEBI" id="CHEBI:83624"/>
        <dbReference type="EC" id="2.7.7.108"/>
    </reaction>
</comment>
<comment type="catalytic activity">
    <reaction evidence="1">
        <text>L-histidyl-[protein] + UTP = N(tele)-(5'-uridylyl)-L-histidyl-[protein] + diphosphate</text>
        <dbReference type="Rhea" id="RHEA:83891"/>
        <dbReference type="Rhea" id="RHEA-COMP:9745"/>
        <dbReference type="Rhea" id="RHEA-COMP:20239"/>
        <dbReference type="ChEBI" id="CHEBI:29979"/>
        <dbReference type="ChEBI" id="CHEBI:33019"/>
        <dbReference type="ChEBI" id="CHEBI:46398"/>
        <dbReference type="ChEBI" id="CHEBI:233474"/>
    </reaction>
</comment>
<comment type="catalytic activity">
    <reaction evidence="1">
        <text>L-seryl-[protein] + UTP = O-(5'-uridylyl)-L-seryl-[protein] + diphosphate</text>
        <dbReference type="Rhea" id="RHEA:64604"/>
        <dbReference type="Rhea" id="RHEA-COMP:9863"/>
        <dbReference type="Rhea" id="RHEA-COMP:16635"/>
        <dbReference type="ChEBI" id="CHEBI:29999"/>
        <dbReference type="ChEBI" id="CHEBI:33019"/>
        <dbReference type="ChEBI" id="CHEBI:46398"/>
        <dbReference type="ChEBI" id="CHEBI:156051"/>
    </reaction>
</comment>
<comment type="catalytic activity">
    <reaction evidence="1">
        <text>L-tyrosyl-[protein] + UTP = O-(5'-uridylyl)-L-tyrosyl-[protein] + diphosphate</text>
        <dbReference type="Rhea" id="RHEA:83887"/>
        <dbReference type="Rhea" id="RHEA-COMP:10136"/>
        <dbReference type="Rhea" id="RHEA-COMP:20238"/>
        <dbReference type="ChEBI" id="CHEBI:33019"/>
        <dbReference type="ChEBI" id="CHEBI:46398"/>
        <dbReference type="ChEBI" id="CHEBI:46858"/>
        <dbReference type="ChEBI" id="CHEBI:90602"/>
    </reaction>
</comment>
<comment type="cofactor">
    <cofactor evidence="1">
        <name>Mg(2+)</name>
        <dbReference type="ChEBI" id="CHEBI:18420"/>
    </cofactor>
    <cofactor evidence="1">
        <name>Mn(2+)</name>
        <dbReference type="ChEBI" id="CHEBI:29035"/>
    </cofactor>
</comment>
<comment type="similarity">
    <text evidence="1">Belongs to the SELO family.</text>
</comment>
<organism>
    <name type="scientific">Clostridium botulinum (strain Okra / Type B1)</name>
    <dbReference type="NCBI Taxonomy" id="498213"/>
    <lineage>
        <taxon>Bacteria</taxon>
        <taxon>Bacillati</taxon>
        <taxon>Bacillota</taxon>
        <taxon>Clostridia</taxon>
        <taxon>Eubacteriales</taxon>
        <taxon>Clostridiaceae</taxon>
        <taxon>Clostridium</taxon>
    </lineage>
</organism>
<evidence type="ECO:0000255" key="1">
    <source>
        <dbReference type="HAMAP-Rule" id="MF_00692"/>
    </source>
</evidence>
<protein>
    <recommendedName>
        <fullName evidence="1">Protein nucleotidyltransferase YdiU</fullName>
        <ecNumber evidence="1">2.7.7.-</ecNumber>
    </recommendedName>
    <alternativeName>
        <fullName evidence="1">Protein adenylyltransferase YdiU</fullName>
        <ecNumber evidence="1">2.7.7.108</ecNumber>
    </alternativeName>
    <alternativeName>
        <fullName evidence="1">Protein uridylyltransferase YdiU</fullName>
        <ecNumber evidence="1">2.7.7.-</ecNumber>
    </alternativeName>
</protein>
<feature type="chain" id="PRO_1000132102" description="Protein nucleotidyltransferase YdiU">
    <location>
        <begin position="1"/>
        <end position="491"/>
    </location>
</feature>
<feature type="active site" description="Proton acceptor" evidence="1">
    <location>
        <position position="256"/>
    </location>
</feature>
<feature type="binding site" evidence="1">
    <location>
        <position position="94"/>
    </location>
    <ligand>
        <name>ATP</name>
        <dbReference type="ChEBI" id="CHEBI:30616"/>
    </ligand>
</feature>
<feature type="binding site" evidence="1">
    <location>
        <position position="96"/>
    </location>
    <ligand>
        <name>ATP</name>
        <dbReference type="ChEBI" id="CHEBI:30616"/>
    </ligand>
</feature>
<feature type="binding site" evidence="1">
    <location>
        <position position="97"/>
    </location>
    <ligand>
        <name>ATP</name>
        <dbReference type="ChEBI" id="CHEBI:30616"/>
    </ligand>
</feature>
<feature type="binding site" evidence="1">
    <location>
        <position position="117"/>
    </location>
    <ligand>
        <name>ATP</name>
        <dbReference type="ChEBI" id="CHEBI:30616"/>
    </ligand>
</feature>
<feature type="binding site" evidence="1">
    <location>
        <position position="129"/>
    </location>
    <ligand>
        <name>ATP</name>
        <dbReference type="ChEBI" id="CHEBI:30616"/>
    </ligand>
</feature>
<feature type="binding site" evidence="1">
    <location>
        <position position="130"/>
    </location>
    <ligand>
        <name>ATP</name>
        <dbReference type="ChEBI" id="CHEBI:30616"/>
    </ligand>
</feature>
<feature type="binding site" evidence="1">
    <location>
        <position position="180"/>
    </location>
    <ligand>
        <name>ATP</name>
        <dbReference type="ChEBI" id="CHEBI:30616"/>
    </ligand>
</feature>
<feature type="binding site" evidence="1">
    <location>
        <position position="187"/>
    </location>
    <ligand>
        <name>ATP</name>
        <dbReference type="ChEBI" id="CHEBI:30616"/>
    </ligand>
</feature>
<feature type="binding site" evidence="1">
    <location>
        <position position="257"/>
    </location>
    <ligand>
        <name>Mg(2+)</name>
        <dbReference type="ChEBI" id="CHEBI:18420"/>
    </ligand>
</feature>
<feature type="binding site" evidence="1">
    <location>
        <position position="266"/>
    </location>
    <ligand>
        <name>ATP</name>
        <dbReference type="ChEBI" id="CHEBI:30616"/>
    </ligand>
</feature>
<feature type="binding site" evidence="1">
    <location>
        <position position="266"/>
    </location>
    <ligand>
        <name>Mg(2+)</name>
        <dbReference type="ChEBI" id="CHEBI:18420"/>
    </ligand>
</feature>
<name>SELO_CLOBK</name>
<dbReference type="EC" id="2.7.7.-" evidence="1"/>
<dbReference type="EC" id="2.7.7.108" evidence="1"/>
<dbReference type="EMBL" id="CP000939">
    <property type="protein sequence ID" value="ACA45991.1"/>
    <property type="molecule type" value="Genomic_DNA"/>
</dbReference>
<dbReference type="RefSeq" id="WP_003404329.1">
    <property type="nucleotide sequence ID" value="NC_010516.1"/>
</dbReference>
<dbReference type="SMR" id="B1IJ78"/>
<dbReference type="KEGG" id="cbb:CLD_3372"/>
<dbReference type="HOGENOM" id="CLU_010245_4_1_9"/>
<dbReference type="Proteomes" id="UP000008541">
    <property type="component" value="Chromosome"/>
</dbReference>
<dbReference type="GO" id="GO:0070733">
    <property type="term" value="F:AMPylase activity"/>
    <property type="evidence" value="ECO:0007669"/>
    <property type="project" value="RHEA"/>
</dbReference>
<dbReference type="GO" id="GO:0005524">
    <property type="term" value="F:ATP binding"/>
    <property type="evidence" value="ECO:0007669"/>
    <property type="project" value="UniProtKB-UniRule"/>
</dbReference>
<dbReference type="GO" id="GO:0000287">
    <property type="term" value="F:magnesium ion binding"/>
    <property type="evidence" value="ECO:0007669"/>
    <property type="project" value="UniProtKB-UniRule"/>
</dbReference>
<dbReference type="HAMAP" id="MF_00692">
    <property type="entry name" value="YdiU_SelO"/>
    <property type="match status" value="1"/>
</dbReference>
<dbReference type="InterPro" id="IPR003846">
    <property type="entry name" value="SelO"/>
</dbReference>
<dbReference type="NCBIfam" id="NF000658">
    <property type="entry name" value="PRK00029.1"/>
    <property type="match status" value="1"/>
</dbReference>
<dbReference type="PANTHER" id="PTHR12153:SF15">
    <property type="entry name" value="PROTEIN ADENYLYLTRANSFERASE SELO, MITOCHONDRIAL"/>
    <property type="match status" value="1"/>
</dbReference>
<dbReference type="PANTHER" id="PTHR12153">
    <property type="entry name" value="SELENOPROTEIN O"/>
    <property type="match status" value="1"/>
</dbReference>
<dbReference type="Pfam" id="PF02696">
    <property type="entry name" value="SelO"/>
    <property type="match status" value="1"/>
</dbReference>
<gene>
    <name evidence="1" type="primary">ydiU</name>
    <name evidence="1" type="synonym">selO</name>
    <name type="ordered locus">CLD_3372</name>
</gene>
<sequence length="491" mass="55295">MEERKVIIKTGLNLENSYTSLPEIFFTRQNPNRVPSPKLAVLNYPLITSLGLNAQVLQSTDGVDILAGNKTPEEAIPISQAYAGHQFGHFTMLGDGRAILLGEHITPQGERFDIQLKGSGKTPYSRGGDGKAALGPMLREYIISEAMNALGIPTTRSLAVVTTGESIMRETELSGAILTRVAASHIRVGTFEYVSRWGTIQELRALADYTLQRHFKKRNDKDNPYLFLLQEVIKKQAELIAKWQLIGFVHGVMNTDNMTISGETIDYGPCAFMDVYDPKTVFSSIDIYGRYAYGNQPNIAAWNLARLAETLLPLLHINPNEAIKIAENAISDFTKLYKNNWLSGMRGKLGIFNEELEDEYLIEDLLSIMHKYGADYTNTFRALTFDNIEDTVLGGKVEFDKWYKLWQERLTRQEESKLSSRQLMKSSNPSVIPRNHRVEEALEAAVKEGDYSVMEKLLDALSKPYAYSKEQDYYSTLPEPSTCSYQTYCGT</sequence>
<reference key="1">
    <citation type="journal article" date="2007" name="PLoS ONE">
        <title>Analysis of the neurotoxin complex genes in Clostridium botulinum A1-A4 and B1 strains: BoNT/A3, /Ba4 and /B1 clusters are located within plasmids.</title>
        <authorList>
            <person name="Smith T.J."/>
            <person name="Hill K.K."/>
            <person name="Foley B.T."/>
            <person name="Detter J.C."/>
            <person name="Munk A.C."/>
            <person name="Bruce D.C."/>
            <person name="Doggett N.A."/>
            <person name="Smith L.A."/>
            <person name="Marks J.D."/>
            <person name="Xie G."/>
            <person name="Brettin T.S."/>
        </authorList>
    </citation>
    <scope>NUCLEOTIDE SEQUENCE [LARGE SCALE GENOMIC DNA]</scope>
    <source>
        <strain>Okra / Type B1</strain>
    </source>
</reference>
<accession>B1IJ78</accession>